<proteinExistence type="inferred from homology"/>
<sequence>MLLTHLNEENQPKMVDIGDKETTERIALASGRISMNKEAYDAIINHGVKKGPVLQTAIIAGIMGAKKTSELIPMCHSIMLNGVDIDILEEKETCSFKLYARVKTQAKTGVEMEALMSVSIGLLTIYDMVKAIDKSMTISGVMLEHKSGGKSGDYNAKK</sequence>
<feature type="chain" id="PRO_1000139274" description="Cyclic pyranopterin monophosphate synthase">
    <location>
        <begin position="1"/>
        <end position="158"/>
    </location>
</feature>
<feature type="active site" evidence="1">
    <location>
        <position position="127"/>
    </location>
</feature>
<feature type="binding site" evidence="1">
    <location>
        <begin position="74"/>
        <end position="76"/>
    </location>
    <ligand>
        <name>substrate</name>
    </ligand>
</feature>
<feature type="binding site" evidence="1">
    <location>
        <begin position="112"/>
        <end position="113"/>
    </location>
    <ligand>
        <name>substrate</name>
    </ligand>
</feature>
<keyword id="KW-0456">Lyase</keyword>
<keyword id="KW-0501">Molybdenum cofactor biosynthesis</keyword>
<keyword id="KW-1185">Reference proteome</keyword>
<organism>
    <name type="scientific">Helicobacter pylori (strain G27)</name>
    <dbReference type="NCBI Taxonomy" id="563041"/>
    <lineage>
        <taxon>Bacteria</taxon>
        <taxon>Pseudomonadati</taxon>
        <taxon>Campylobacterota</taxon>
        <taxon>Epsilonproteobacteria</taxon>
        <taxon>Campylobacterales</taxon>
        <taxon>Helicobacteraceae</taxon>
        <taxon>Helicobacter</taxon>
    </lineage>
</organism>
<name>MOAC_HELPG</name>
<gene>
    <name evidence="1" type="primary">moaC</name>
    <name type="ordered locus">HPG27_754</name>
</gene>
<reference key="1">
    <citation type="journal article" date="2009" name="J. Bacteriol.">
        <title>The complete genome sequence of Helicobacter pylori strain G27.</title>
        <authorList>
            <person name="Baltrus D.A."/>
            <person name="Amieva M.R."/>
            <person name="Covacci A."/>
            <person name="Lowe T.M."/>
            <person name="Merrell D.S."/>
            <person name="Ottemann K.M."/>
            <person name="Stein M."/>
            <person name="Salama N.R."/>
            <person name="Guillemin K."/>
        </authorList>
    </citation>
    <scope>NUCLEOTIDE SEQUENCE [LARGE SCALE GENOMIC DNA]</scope>
    <source>
        <strain>G27</strain>
    </source>
</reference>
<accession>B5Z7G0</accession>
<protein>
    <recommendedName>
        <fullName evidence="1">Cyclic pyranopterin monophosphate synthase</fullName>
        <ecNumber evidence="1">4.6.1.17</ecNumber>
    </recommendedName>
    <alternativeName>
        <fullName evidence="1">Molybdenum cofactor biosynthesis protein C</fullName>
    </alternativeName>
</protein>
<evidence type="ECO:0000255" key="1">
    <source>
        <dbReference type="HAMAP-Rule" id="MF_01224"/>
    </source>
</evidence>
<comment type="function">
    <text evidence="1">Catalyzes the conversion of (8S)-3',8-cyclo-7,8-dihydroguanosine 5'-triphosphate to cyclic pyranopterin monophosphate (cPMP).</text>
</comment>
<comment type="catalytic activity">
    <reaction evidence="1">
        <text>(8S)-3',8-cyclo-7,8-dihydroguanosine 5'-triphosphate = cyclic pyranopterin phosphate + diphosphate</text>
        <dbReference type="Rhea" id="RHEA:49580"/>
        <dbReference type="ChEBI" id="CHEBI:33019"/>
        <dbReference type="ChEBI" id="CHEBI:59648"/>
        <dbReference type="ChEBI" id="CHEBI:131766"/>
        <dbReference type="EC" id="4.6.1.17"/>
    </reaction>
</comment>
<comment type="pathway">
    <text evidence="1">Cofactor biosynthesis; molybdopterin biosynthesis.</text>
</comment>
<comment type="subunit">
    <text evidence="1">Homohexamer; trimer of dimers.</text>
</comment>
<comment type="similarity">
    <text evidence="1">Belongs to the MoaC family.</text>
</comment>
<dbReference type="EC" id="4.6.1.17" evidence="1"/>
<dbReference type="EMBL" id="CP001173">
    <property type="protein sequence ID" value="ACI27509.1"/>
    <property type="molecule type" value="Genomic_DNA"/>
</dbReference>
<dbReference type="RefSeq" id="WP_000927594.1">
    <property type="nucleotide sequence ID" value="NC_011333.1"/>
</dbReference>
<dbReference type="SMR" id="B5Z7G0"/>
<dbReference type="KEGG" id="hpg:HPG27_754"/>
<dbReference type="HOGENOM" id="CLU_074693_1_1_7"/>
<dbReference type="UniPathway" id="UPA00344"/>
<dbReference type="Proteomes" id="UP000001735">
    <property type="component" value="Chromosome"/>
</dbReference>
<dbReference type="GO" id="GO:0061799">
    <property type="term" value="F:cyclic pyranopterin monophosphate synthase activity"/>
    <property type="evidence" value="ECO:0007669"/>
    <property type="project" value="UniProtKB-UniRule"/>
</dbReference>
<dbReference type="GO" id="GO:0006777">
    <property type="term" value="P:Mo-molybdopterin cofactor biosynthetic process"/>
    <property type="evidence" value="ECO:0007669"/>
    <property type="project" value="UniProtKB-UniRule"/>
</dbReference>
<dbReference type="CDD" id="cd01420">
    <property type="entry name" value="MoaC_PE"/>
    <property type="match status" value="1"/>
</dbReference>
<dbReference type="Gene3D" id="3.30.70.640">
    <property type="entry name" value="Molybdopterin cofactor biosynthesis C (MoaC) domain"/>
    <property type="match status" value="1"/>
</dbReference>
<dbReference type="HAMAP" id="MF_01224_B">
    <property type="entry name" value="MoaC_B"/>
    <property type="match status" value="1"/>
</dbReference>
<dbReference type="InterPro" id="IPR023045">
    <property type="entry name" value="MoaC"/>
</dbReference>
<dbReference type="InterPro" id="IPR047594">
    <property type="entry name" value="MoaC_bact/euk"/>
</dbReference>
<dbReference type="InterPro" id="IPR036522">
    <property type="entry name" value="MoaC_sf"/>
</dbReference>
<dbReference type="InterPro" id="IPR050105">
    <property type="entry name" value="MoCo_biosynth_MoaA/MoaC"/>
</dbReference>
<dbReference type="InterPro" id="IPR002820">
    <property type="entry name" value="Mopterin_CF_biosynth-C_dom"/>
</dbReference>
<dbReference type="NCBIfam" id="TIGR00581">
    <property type="entry name" value="moaC"/>
    <property type="match status" value="1"/>
</dbReference>
<dbReference type="NCBIfam" id="NF006870">
    <property type="entry name" value="PRK09364.1"/>
    <property type="match status" value="1"/>
</dbReference>
<dbReference type="PANTHER" id="PTHR22960">
    <property type="entry name" value="MOLYBDOPTERIN COFACTOR SYNTHESIS PROTEIN A"/>
    <property type="match status" value="1"/>
</dbReference>
<dbReference type="Pfam" id="PF01967">
    <property type="entry name" value="MoaC"/>
    <property type="match status" value="1"/>
</dbReference>
<dbReference type="SUPFAM" id="SSF55040">
    <property type="entry name" value="Molybdenum cofactor biosynthesis protein C, MoaC"/>
    <property type="match status" value="1"/>
</dbReference>